<name>RK2_MARPO</name>
<organism>
    <name type="scientific">Marchantia polymorpha</name>
    <name type="common">Common liverwort</name>
    <name type="synonym">Marchantia aquatica</name>
    <dbReference type="NCBI Taxonomy" id="3197"/>
    <lineage>
        <taxon>Eukaryota</taxon>
        <taxon>Viridiplantae</taxon>
        <taxon>Streptophyta</taxon>
        <taxon>Embryophyta</taxon>
        <taxon>Marchantiophyta</taxon>
        <taxon>Marchantiopsida</taxon>
        <taxon>Marchantiidae</taxon>
        <taxon>Marchantiales</taxon>
        <taxon>Marchantiaceae</taxon>
        <taxon>Marchantia</taxon>
    </lineage>
</organism>
<reference key="1">
    <citation type="journal article" date="1988" name="J. Mol. Biol.">
        <title>Structure and organization of Marchantia polymorpha chloroplast genome. III. Gene organization of the large single copy region from rbcL to trnI(CAU).</title>
        <authorList>
            <person name="Fukuzawa H."/>
            <person name="Kohchi T."/>
            <person name="Sano T."/>
            <person name="Shirai H."/>
            <person name="Umesono K."/>
            <person name="Inokuchi H."/>
            <person name="Ozeki H."/>
            <person name="Ohyama K."/>
        </authorList>
    </citation>
    <scope>NUCLEOTIDE SEQUENCE [GENOMIC DNA]</scope>
</reference>
<reference key="2">
    <citation type="journal article" date="1986" name="Nature">
        <title>Chloroplast gene organization deduced from complete sequence of liverwort Marchantia polymorpha chloroplast DNA.</title>
        <authorList>
            <person name="Ohyama K."/>
            <person name="Fukuzawa H."/>
            <person name="Kohchi T."/>
            <person name="Shirai H."/>
            <person name="Sano T."/>
            <person name="Sano S."/>
            <person name="Umesono K."/>
            <person name="Shiki Y."/>
            <person name="Takeuchi M."/>
            <person name="Chang Z."/>
            <person name="Aota S."/>
            <person name="Inokuchi H."/>
            <person name="Ozeki H."/>
        </authorList>
    </citation>
    <scope>NUCLEOTIDE SEQUENCE [LARGE SCALE GENOMIC DNA]</scope>
</reference>
<dbReference type="EMBL" id="X04465">
    <property type="protein sequence ID" value="CAA28127.1"/>
    <property type="molecule type" value="Genomic_DNA"/>
</dbReference>
<dbReference type="PIR" id="A02760">
    <property type="entry name" value="R5LV2"/>
</dbReference>
<dbReference type="RefSeq" id="NP_039341.1">
    <property type="nucleotide sequence ID" value="NC_001319.1"/>
</dbReference>
<dbReference type="SMR" id="P06378"/>
<dbReference type="GeneID" id="2702611"/>
<dbReference type="GO" id="GO:0009507">
    <property type="term" value="C:chloroplast"/>
    <property type="evidence" value="ECO:0007669"/>
    <property type="project" value="UniProtKB-SubCell"/>
</dbReference>
<dbReference type="GO" id="GO:0015934">
    <property type="term" value="C:large ribosomal subunit"/>
    <property type="evidence" value="ECO:0007669"/>
    <property type="project" value="InterPro"/>
</dbReference>
<dbReference type="GO" id="GO:0019843">
    <property type="term" value="F:rRNA binding"/>
    <property type="evidence" value="ECO:0007669"/>
    <property type="project" value="UniProtKB-UniRule"/>
</dbReference>
<dbReference type="GO" id="GO:0003735">
    <property type="term" value="F:structural constituent of ribosome"/>
    <property type="evidence" value="ECO:0007669"/>
    <property type="project" value="InterPro"/>
</dbReference>
<dbReference type="GO" id="GO:0016740">
    <property type="term" value="F:transferase activity"/>
    <property type="evidence" value="ECO:0007669"/>
    <property type="project" value="InterPro"/>
</dbReference>
<dbReference type="GO" id="GO:0006412">
    <property type="term" value="P:translation"/>
    <property type="evidence" value="ECO:0007669"/>
    <property type="project" value="UniProtKB-UniRule"/>
</dbReference>
<dbReference type="FunFam" id="2.30.30.30:FF:000001">
    <property type="entry name" value="50S ribosomal protein L2"/>
    <property type="match status" value="1"/>
</dbReference>
<dbReference type="FunFam" id="4.10.950.10:FF:000001">
    <property type="entry name" value="50S ribosomal protein L2"/>
    <property type="match status" value="1"/>
</dbReference>
<dbReference type="Gene3D" id="2.30.30.30">
    <property type="match status" value="1"/>
</dbReference>
<dbReference type="Gene3D" id="2.40.50.140">
    <property type="entry name" value="Nucleic acid-binding proteins"/>
    <property type="match status" value="1"/>
</dbReference>
<dbReference type="Gene3D" id="4.10.950.10">
    <property type="entry name" value="Ribosomal protein L2, domain 3"/>
    <property type="match status" value="1"/>
</dbReference>
<dbReference type="HAMAP" id="MF_01320_B">
    <property type="entry name" value="Ribosomal_uL2_B"/>
    <property type="match status" value="1"/>
</dbReference>
<dbReference type="InterPro" id="IPR012340">
    <property type="entry name" value="NA-bd_OB-fold"/>
</dbReference>
<dbReference type="InterPro" id="IPR014722">
    <property type="entry name" value="Rib_uL2_dom2"/>
</dbReference>
<dbReference type="InterPro" id="IPR002171">
    <property type="entry name" value="Ribosomal_uL2"/>
</dbReference>
<dbReference type="InterPro" id="IPR005880">
    <property type="entry name" value="Ribosomal_uL2_bac/org-type"/>
</dbReference>
<dbReference type="InterPro" id="IPR022669">
    <property type="entry name" value="Ribosomal_uL2_C"/>
</dbReference>
<dbReference type="InterPro" id="IPR022671">
    <property type="entry name" value="Ribosomal_uL2_CS"/>
</dbReference>
<dbReference type="InterPro" id="IPR014726">
    <property type="entry name" value="Ribosomal_uL2_dom3"/>
</dbReference>
<dbReference type="InterPro" id="IPR022666">
    <property type="entry name" value="Ribosomal_uL2_RNA-bd_dom"/>
</dbReference>
<dbReference type="InterPro" id="IPR008991">
    <property type="entry name" value="Translation_prot_SH3-like_sf"/>
</dbReference>
<dbReference type="NCBIfam" id="TIGR01171">
    <property type="entry name" value="rplB_bact"/>
    <property type="match status" value="1"/>
</dbReference>
<dbReference type="PANTHER" id="PTHR13691:SF5">
    <property type="entry name" value="LARGE RIBOSOMAL SUBUNIT PROTEIN UL2M"/>
    <property type="match status" value="1"/>
</dbReference>
<dbReference type="PANTHER" id="PTHR13691">
    <property type="entry name" value="RIBOSOMAL PROTEIN L2"/>
    <property type="match status" value="1"/>
</dbReference>
<dbReference type="Pfam" id="PF00181">
    <property type="entry name" value="Ribosomal_L2"/>
    <property type="match status" value="1"/>
</dbReference>
<dbReference type="Pfam" id="PF03947">
    <property type="entry name" value="Ribosomal_L2_C"/>
    <property type="match status" value="1"/>
</dbReference>
<dbReference type="PIRSF" id="PIRSF002158">
    <property type="entry name" value="Ribosomal_L2"/>
    <property type="match status" value="1"/>
</dbReference>
<dbReference type="SMART" id="SM01383">
    <property type="entry name" value="Ribosomal_L2"/>
    <property type="match status" value="1"/>
</dbReference>
<dbReference type="SMART" id="SM01382">
    <property type="entry name" value="Ribosomal_L2_C"/>
    <property type="match status" value="1"/>
</dbReference>
<dbReference type="SUPFAM" id="SSF50249">
    <property type="entry name" value="Nucleic acid-binding proteins"/>
    <property type="match status" value="1"/>
</dbReference>
<dbReference type="SUPFAM" id="SSF50104">
    <property type="entry name" value="Translation proteins SH3-like domain"/>
    <property type="match status" value="1"/>
</dbReference>
<dbReference type="PROSITE" id="PS00467">
    <property type="entry name" value="RIBOSOMAL_L2"/>
    <property type="match status" value="1"/>
</dbReference>
<keyword id="KW-0150">Chloroplast</keyword>
<keyword id="KW-0934">Plastid</keyword>
<keyword id="KW-0687">Ribonucleoprotein</keyword>
<keyword id="KW-0689">Ribosomal protein</keyword>
<sequence>MAIRLYRAYTPGTRNRSVPKFDEIVKCQPQKKLTYNKHIKKGRNNRGIITSQHRGGGHKRLYRKIDFQRNKKYITGKIKTIEYDPNRNTYICLINYEDGEKRYILYPRGIKLDDTIISSEEAPILIGNTLPLTNMPLGTAIHNIEITPGKGGQLVRAAGTVAKIIAKEGQLVTLRLPSGEIRLISQKCLATIGQIGNVDVNNLRIGKAGSKRWLGKRPKVRGVVMNPIDHPHGGGEGRAPIGRKKPLTPWGHPALGKRSRKNNKYSDTLILRRRKNS</sequence>
<protein>
    <recommendedName>
        <fullName evidence="2">Large ribosomal subunit protein uL2c</fullName>
    </recommendedName>
    <alternativeName>
        <fullName evidence="4">50S ribosomal protein L2, chloroplastic</fullName>
    </alternativeName>
</protein>
<accession>P06378</accession>
<gene>
    <name type="primary">rpl2</name>
</gene>
<geneLocation type="chloroplast"/>
<evidence type="ECO:0000250" key="1"/>
<evidence type="ECO:0000255" key="2">
    <source>
        <dbReference type="HAMAP-Rule" id="MF_01320"/>
    </source>
</evidence>
<evidence type="ECO:0000256" key="3">
    <source>
        <dbReference type="SAM" id="MobiDB-lite"/>
    </source>
</evidence>
<evidence type="ECO:0000305" key="4"/>
<comment type="subunit">
    <text evidence="1">Part of the 50S ribosomal subunit.</text>
</comment>
<comment type="subcellular location">
    <subcellularLocation>
        <location>Plastid</location>
        <location>Chloroplast</location>
    </subcellularLocation>
</comment>
<comment type="similarity">
    <text evidence="4">Belongs to the universal ribosomal protein uL2 family.</text>
</comment>
<proteinExistence type="inferred from homology"/>
<feature type="chain" id="PRO_0000129682" description="Large ribosomal subunit protein uL2c">
    <location>
        <begin position="1"/>
        <end position="277"/>
    </location>
</feature>
<feature type="region of interest" description="Disordered" evidence="3">
    <location>
        <begin position="223"/>
        <end position="277"/>
    </location>
</feature>